<proteinExistence type="inferred from homology"/>
<dbReference type="EMBL" id="CP000446">
    <property type="protein sequence ID" value="ABI38312.1"/>
    <property type="molecule type" value="Genomic_DNA"/>
</dbReference>
<dbReference type="RefSeq" id="WP_011622020.1">
    <property type="nucleotide sequence ID" value="NC_008321.1"/>
</dbReference>
<dbReference type="SMR" id="Q0HKV5"/>
<dbReference type="GeneID" id="94727244"/>
<dbReference type="KEGG" id="she:Shewmr4_1232"/>
<dbReference type="HOGENOM" id="CLU_016077_6_2_6"/>
<dbReference type="GO" id="GO:0005525">
    <property type="term" value="F:GTP binding"/>
    <property type="evidence" value="ECO:0007669"/>
    <property type="project" value="UniProtKB-UniRule"/>
</dbReference>
<dbReference type="GO" id="GO:0043022">
    <property type="term" value="F:ribosome binding"/>
    <property type="evidence" value="ECO:0007669"/>
    <property type="project" value="TreeGrafter"/>
</dbReference>
<dbReference type="GO" id="GO:0042254">
    <property type="term" value="P:ribosome biogenesis"/>
    <property type="evidence" value="ECO:0007669"/>
    <property type="project" value="UniProtKB-KW"/>
</dbReference>
<dbReference type="CDD" id="cd01894">
    <property type="entry name" value="EngA1"/>
    <property type="match status" value="1"/>
</dbReference>
<dbReference type="CDD" id="cd01895">
    <property type="entry name" value="EngA2"/>
    <property type="match status" value="1"/>
</dbReference>
<dbReference type="FunFam" id="3.30.300.20:FF:000004">
    <property type="entry name" value="GTPase Der"/>
    <property type="match status" value="1"/>
</dbReference>
<dbReference type="FunFam" id="3.40.50.300:FF:000040">
    <property type="entry name" value="GTPase Der"/>
    <property type="match status" value="1"/>
</dbReference>
<dbReference type="FunFam" id="3.40.50.300:FF:000057">
    <property type="entry name" value="GTPase Der"/>
    <property type="match status" value="1"/>
</dbReference>
<dbReference type="Gene3D" id="3.30.300.20">
    <property type="match status" value="1"/>
</dbReference>
<dbReference type="Gene3D" id="3.40.50.300">
    <property type="entry name" value="P-loop containing nucleotide triphosphate hydrolases"/>
    <property type="match status" value="2"/>
</dbReference>
<dbReference type="HAMAP" id="MF_00195">
    <property type="entry name" value="GTPase_Der"/>
    <property type="match status" value="1"/>
</dbReference>
<dbReference type="InterPro" id="IPR031166">
    <property type="entry name" value="G_ENGA"/>
</dbReference>
<dbReference type="InterPro" id="IPR006073">
    <property type="entry name" value="GTP-bd"/>
</dbReference>
<dbReference type="InterPro" id="IPR016484">
    <property type="entry name" value="GTPase_Der"/>
</dbReference>
<dbReference type="InterPro" id="IPR032859">
    <property type="entry name" value="KH_dom-like"/>
</dbReference>
<dbReference type="InterPro" id="IPR015946">
    <property type="entry name" value="KH_dom-like_a/b"/>
</dbReference>
<dbReference type="InterPro" id="IPR027417">
    <property type="entry name" value="P-loop_NTPase"/>
</dbReference>
<dbReference type="InterPro" id="IPR005225">
    <property type="entry name" value="Small_GTP-bd"/>
</dbReference>
<dbReference type="NCBIfam" id="TIGR03594">
    <property type="entry name" value="GTPase_EngA"/>
    <property type="match status" value="1"/>
</dbReference>
<dbReference type="NCBIfam" id="TIGR00231">
    <property type="entry name" value="small_GTP"/>
    <property type="match status" value="2"/>
</dbReference>
<dbReference type="PANTHER" id="PTHR43834">
    <property type="entry name" value="GTPASE DER"/>
    <property type="match status" value="1"/>
</dbReference>
<dbReference type="PANTHER" id="PTHR43834:SF6">
    <property type="entry name" value="GTPASE DER"/>
    <property type="match status" value="1"/>
</dbReference>
<dbReference type="Pfam" id="PF14714">
    <property type="entry name" value="KH_dom-like"/>
    <property type="match status" value="1"/>
</dbReference>
<dbReference type="Pfam" id="PF01926">
    <property type="entry name" value="MMR_HSR1"/>
    <property type="match status" value="2"/>
</dbReference>
<dbReference type="PIRSF" id="PIRSF006485">
    <property type="entry name" value="GTP-binding_EngA"/>
    <property type="match status" value="1"/>
</dbReference>
<dbReference type="PRINTS" id="PR00326">
    <property type="entry name" value="GTP1OBG"/>
</dbReference>
<dbReference type="SUPFAM" id="SSF52540">
    <property type="entry name" value="P-loop containing nucleoside triphosphate hydrolases"/>
    <property type="match status" value="2"/>
</dbReference>
<dbReference type="PROSITE" id="PS51712">
    <property type="entry name" value="G_ENGA"/>
    <property type="match status" value="2"/>
</dbReference>
<sequence length="488" mass="54646">MIPVVALVGRPNVGKSTLFNRLTRTRDALVADFPGLTRDRKYGRAFLSGYEFIVVDTGGIDGTEEGIETKMAEQSLAAIEEADVVLFMTDARAGLTAADLSIAQHLRSRQKTTFVVANKIDGIDADSACAEFWSLGLGEVYQMAAAQGRGVTNMIEYALTPYAEAMGIERQGEEEEVDERQYTEEEAEAEQKRLQDLPIKLAIIGKPNVGKSTLTNRILGEERVVVYDEPGTTRDSIYIPMERDGREYVIIDTAGVRRRSKVHEVIEKFSVIKTLKAVEDANVVLLIIDAREGIAEQDLGLLGFALNAGRALVIAVNKWDGIDQGIKDRVKSELDRRLGFIDFARIHFISALHGTGVGHLFESIEEAYDSATRRVSTSMLTRIMQMSQDDHQPPLVNGRRVKLKYAHAGGYNPPIVVIHGNQVSKLPDSYKRYMMNYFRRSLKVVGTPIQLRFQEGDNPFENKVEKLTMSQERRRKRALSHIKDRKTK</sequence>
<gene>
    <name evidence="1" type="primary">der</name>
    <name type="synonym">engA</name>
    <name type="ordered locus">Shewmr4_1232</name>
</gene>
<name>DER_SHESM</name>
<keyword id="KW-0342">GTP-binding</keyword>
<keyword id="KW-0547">Nucleotide-binding</keyword>
<keyword id="KW-0677">Repeat</keyword>
<keyword id="KW-0690">Ribosome biogenesis</keyword>
<feature type="chain" id="PRO_1000011739" description="GTPase Der">
    <location>
        <begin position="1"/>
        <end position="488"/>
    </location>
</feature>
<feature type="domain" description="EngA-type G 1">
    <location>
        <begin position="3"/>
        <end position="166"/>
    </location>
</feature>
<feature type="domain" description="EngA-type G 2">
    <location>
        <begin position="199"/>
        <end position="372"/>
    </location>
</feature>
<feature type="domain" description="KH-like" evidence="1">
    <location>
        <begin position="373"/>
        <end position="457"/>
    </location>
</feature>
<feature type="binding site" evidence="1">
    <location>
        <begin position="9"/>
        <end position="16"/>
    </location>
    <ligand>
        <name>GTP</name>
        <dbReference type="ChEBI" id="CHEBI:37565"/>
        <label>1</label>
    </ligand>
</feature>
<feature type="binding site" evidence="1">
    <location>
        <begin position="56"/>
        <end position="60"/>
    </location>
    <ligand>
        <name>GTP</name>
        <dbReference type="ChEBI" id="CHEBI:37565"/>
        <label>1</label>
    </ligand>
</feature>
<feature type="binding site" evidence="1">
    <location>
        <begin position="118"/>
        <end position="121"/>
    </location>
    <ligand>
        <name>GTP</name>
        <dbReference type="ChEBI" id="CHEBI:37565"/>
        <label>1</label>
    </ligand>
</feature>
<feature type="binding site" evidence="1">
    <location>
        <begin position="205"/>
        <end position="212"/>
    </location>
    <ligand>
        <name>GTP</name>
        <dbReference type="ChEBI" id="CHEBI:37565"/>
        <label>2</label>
    </ligand>
</feature>
<feature type="binding site" evidence="1">
    <location>
        <begin position="252"/>
        <end position="256"/>
    </location>
    <ligand>
        <name>GTP</name>
        <dbReference type="ChEBI" id="CHEBI:37565"/>
        <label>2</label>
    </ligand>
</feature>
<feature type="binding site" evidence="1">
    <location>
        <begin position="317"/>
        <end position="320"/>
    </location>
    <ligand>
        <name>GTP</name>
        <dbReference type="ChEBI" id="CHEBI:37565"/>
        <label>2</label>
    </ligand>
</feature>
<reference key="1">
    <citation type="submission" date="2006-08" db="EMBL/GenBank/DDBJ databases">
        <title>Complete sequence of Shewanella sp. MR-4.</title>
        <authorList>
            <consortium name="US DOE Joint Genome Institute"/>
            <person name="Copeland A."/>
            <person name="Lucas S."/>
            <person name="Lapidus A."/>
            <person name="Barry K."/>
            <person name="Detter J.C."/>
            <person name="Glavina del Rio T."/>
            <person name="Hammon N."/>
            <person name="Israni S."/>
            <person name="Dalin E."/>
            <person name="Tice H."/>
            <person name="Pitluck S."/>
            <person name="Kiss H."/>
            <person name="Brettin T."/>
            <person name="Bruce D."/>
            <person name="Han C."/>
            <person name="Tapia R."/>
            <person name="Gilna P."/>
            <person name="Schmutz J."/>
            <person name="Larimer F."/>
            <person name="Land M."/>
            <person name="Hauser L."/>
            <person name="Kyrpides N."/>
            <person name="Mikhailova N."/>
            <person name="Nealson K."/>
            <person name="Konstantinidis K."/>
            <person name="Klappenbach J."/>
            <person name="Tiedje J."/>
            <person name="Richardson P."/>
        </authorList>
    </citation>
    <scope>NUCLEOTIDE SEQUENCE [LARGE SCALE GENOMIC DNA]</scope>
    <source>
        <strain>MR-4</strain>
    </source>
</reference>
<accession>Q0HKV5</accession>
<comment type="function">
    <text evidence="1">GTPase that plays an essential role in the late steps of ribosome biogenesis.</text>
</comment>
<comment type="subunit">
    <text evidence="1">Associates with the 50S ribosomal subunit.</text>
</comment>
<comment type="similarity">
    <text evidence="1">Belongs to the TRAFAC class TrmE-Era-EngA-EngB-Septin-like GTPase superfamily. EngA (Der) GTPase family.</text>
</comment>
<evidence type="ECO:0000255" key="1">
    <source>
        <dbReference type="HAMAP-Rule" id="MF_00195"/>
    </source>
</evidence>
<organism>
    <name type="scientific">Shewanella sp. (strain MR-4)</name>
    <dbReference type="NCBI Taxonomy" id="60480"/>
    <lineage>
        <taxon>Bacteria</taxon>
        <taxon>Pseudomonadati</taxon>
        <taxon>Pseudomonadota</taxon>
        <taxon>Gammaproteobacteria</taxon>
        <taxon>Alteromonadales</taxon>
        <taxon>Shewanellaceae</taxon>
        <taxon>Shewanella</taxon>
    </lineage>
</organism>
<protein>
    <recommendedName>
        <fullName evidence="1">GTPase Der</fullName>
    </recommendedName>
    <alternativeName>
        <fullName evidence="1">GTP-binding protein EngA</fullName>
    </alternativeName>
</protein>